<protein>
    <recommendedName>
        <fullName evidence="1">Large ribosomal subunit protein bL32</fullName>
    </recommendedName>
    <alternativeName>
        <fullName evidence="3">50S ribosomal protein L32</fullName>
    </alternativeName>
</protein>
<evidence type="ECO:0000255" key="1">
    <source>
        <dbReference type="HAMAP-Rule" id="MF_00340"/>
    </source>
</evidence>
<evidence type="ECO:0000256" key="2">
    <source>
        <dbReference type="SAM" id="MobiDB-lite"/>
    </source>
</evidence>
<evidence type="ECO:0000305" key="3"/>
<name>RL32_SHIBS</name>
<reference key="1">
    <citation type="journal article" date="2005" name="Nucleic Acids Res.">
        <title>Genome dynamics and diversity of Shigella species, the etiologic agents of bacillary dysentery.</title>
        <authorList>
            <person name="Yang F."/>
            <person name="Yang J."/>
            <person name="Zhang X."/>
            <person name="Chen L."/>
            <person name="Jiang Y."/>
            <person name="Yan Y."/>
            <person name="Tang X."/>
            <person name="Wang J."/>
            <person name="Xiong Z."/>
            <person name="Dong J."/>
            <person name="Xue Y."/>
            <person name="Zhu Y."/>
            <person name="Xu X."/>
            <person name="Sun L."/>
            <person name="Chen S."/>
            <person name="Nie H."/>
            <person name="Peng J."/>
            <person name="Xu J."/>
            <person name="Wang Y."/>
            <person name="Yuan Z."/>
            <person name="Wen Y."/>
            <person name="Yao Z."/>
            <person name="Shen Y."/>
            <person name="Qiang B."/>
            <person name="Hou Y."/>
            <person name="Yu J."/>
            <person name="Jin Q."/>
        </authorList>
    </citation>
    <scope>NUCLEOTIDE SEQUENCE [LARGE SCALE GENOMIC DNA]</scope>
    <source>
        <strain>Sb227</strain>
    </source>
</reference>
<sequence length="57" mass="6446">MAVQQNKPTRSKRGMRRSHDALTAVTSLSVDKTSGEKHLRHHITADGYYRGRKVIAK</sequence>
<organism>
    <name type="scientific">Shigella boydii serotype 4 (strain Sb227)</name>
    <dbReference type="NCBI Taxonomy" id="300268"/>
    <lineage>
        <taxon>Bacteria</taxon>
        <taxon>Pseudomonadati</taxon>
        <taxon>Pseudomonadota</taxon>
        <taxon>Gammaproteobacteria</taxon>
        <taxon>Enterobacterales</taxon>
        <taxon>Enterobacteriaceae</taxon>
        <taxon>Shigella</taxon>
    </lineage>
</organism>
<feature type="chain" id="PRO_0000225762" description="Large ribosomal subunit protein bL32">
    <location>
        <begin position="1"/>
        <end position="57"/>
    </location>
</feature>
<feature type="region of interest" description="Disordered" evidence="2">
    <location>
        <begin position="1"/>
        <end position="38"/>
    </location>
</feature>
<keyword id="KW-0687">Ribonucleoprotein</keyword>
<keyword id="KW-0689">Ribosomal protein</keyword>
<proteinExistence type="inferred from homology"/>
<dbReference type="EMBL" id="CP000036">
    <property type="protein sequence ID" value="ABB66564.1"/>
    <property type="molecule type" value="Genomic_DNA"/>
</dbReference>
<dbReference type="RefSeq" id="WP_000290727.1">
    <property type="nucleotide sequence ID" value="NC_007613.1"/>
</dbReference>
<dbReference type="SMR" id="Q31ZE4"/>
<dbReference type="GeneID" id="93776319"/>
<dbReference type="KEGG" id="sbo:SBO_1974"/>
<dbReference type="HOGENOM" id="CLU_129084_2_1_6"/>
<dbReference type="Proteomes" id="UP000007067">
    <property type="component" value="Chromosome"/>
</dbReference>
<dbReference type="GO" id="GO:0015934">
    <property type="term" value="C:large ribosomal subunit"/>
    <property type="evidence" value="ECO:0007669"/>
    <property type="project" value="InterPro"/>
</dbReference>
<dbReference type="GO" id="GO:0003735">
    <property type="term" value="F:structural constituent of ribosome"/>
    <property type="evidence" value="ECO:0007669"/>
    <property type="project" value="InterPro"/>
</dbReference>
<dbReference type="GO" id="GO:0006412">
    <property type="term" value="P:translation"/>
    <property type="evidence" value="ECO:0007669"/>
    <property type="project" value="UniProtKB-UniRule"/>
</dbReference>
<dbReference type="HAMAP" id="MF_00340">
    <property type="entry name" value="Ribosomal_bL32"/>
    <property type="match status" value="1"/>
</dbReference>
<dbReference type="InterPro" id="IPR002677">
    <property type="entry name" value="Ribosomal_bL32"/>
</dbReference>
<dbReference type="InterPro" id="IPR044957">
    <property type="entry name" value="Ribosomal_bL32_bact"/>
</dbReference>
<dbReference type="InterPro" id="IPR011332">
    <property type="entry name" value="Ribosomal_zn-bd"/>
</dbReference>
<dbReference type="NCBIfam" id="TIGR01031">
    <property type="entry name" value="rpmF_bact"/>
    <property type="match status" value="1"/>
</dbReference>
<dbReference type="PANTHER" id="PTHR35534">
    <property type="entry name" value="50S RIBOSOMAL PROTEIN L32"/>
    <property type="match status" value="1"/>
</dbReference>
<dbReference type="PANTHER" id="PTHR35534:SF1">
    <property type="entry name" value="LARGE RIBOSOMAL SUBUNIT PROTEIN BL32"/>
    <property type="match status" value="1"/>
</dbReference>
<dbReference type="Pfam" id="PF01783">
    <property type="entry name" value="Ribosomal_L32p"/>
    <property type="match status" value="1"/>
</dbReference>
<dbReference type="SUPFAM" id="SSF57829">
    <property type="entry name" value="Zn-binding ribosomal proteins"/>
    <property type="match status" value="1"/>
</dbReference>
<comment type="similarity">
    <text evidence="1">Belongs to the bacterial ribosomal protein bL32 family.</text>
</comment>
<accession>Q31ZE4</accession>
<gene>
    <name evidence="1" type="primary">rpmF</name>
    <name type="ordered locus">SBO_1974</name>
</gene>